<comment type="catalytic activity">
    <reaction>
        <text>N-(5-phospho-beta-D-ribosyl)anthranilate = 1-(2-carboxyphenylamino)-1-deoxy-D-ribulose 5-phosphate</text>
        <dbReference type="Rhea" id="RHEA:21540"/>
        <dbReference type="ChEBI" id="CHEBI:18277"/>
        <dbReference type="ChEBI" id="CHEBI:58613"/>
        <dbReference type="EC" id="5.3.1.24"/>
    </reaction>
</comment>
<comment type="pathway">
    <text>Amino-acid biosynthesis; L-tryptophan biosynthesis; L-tryptophan from chorismate: step 3/5.</text>
</comment>
<comment type="similarity">
    <text evidence="1">Belongs to the TrpF family.</text>
</comment>
<sequence>MFVKVCGVKSLEELEIVEKYADATGVVVNSKSKRNVPLDAAREIISSAKIPVFLVSTMKNREDWEVAIERTEARYIQIHSDVEPSLLPYLKDEYGVEIMKAFRVPQESENPERDAQMLLKKIRKYEADLILLDTGAGSGKMHDLRVTRIVAEEIPVVVAGGLKPENVEMVIKLVKPFGVDVSSGVERNGKKDEELVREFVRRAKNVVR</sequence>
<name>TRPF_PYRAB</name>
<gene>
    <name type="primary">trpF</name>
    <name type="ordered locus">PYRAB04600</name>
    <name type="ORF">PAB2047</name>
</gene>
<accession>Q9V1G7</accession>
<accession>G8ZGG4</accession>
<dbReference type="EC" id="5.3.1.24"/>
<dbReference type="EMBL" id="AJ248284">
    <property type="protein sequence ID" value="CAB49382.1"/>
    <property type="molecule type" value="Genomic_DNA"/>
</dbReference>
<dbReference type="EMBL" id="HE613800">
    <property type="protein sequence ID" value="CCE69843.1"/>
    <property type="molecule type" value="Genomic_DNA"/>
</dbReference>
<dbReference type="PIR" id="G75162">
    <property type="entry name" value="G75162"/>
</dbReference>
<dbReference type="RefSeq" id="WP_010867584.1">
    <property type="nucleotide sequence ID" value="NC_000868.1"/>
</dbReference>
<dbReference type="SMR" id="Q9V1G7"/>
<dbReference type="STRING" id="272844.PAB2047"/>
<dbReference type="KEGG" id="pab:PAB2047"/>
<dbReference type="PATRIC" id="fig|272844.11.peg.487"/>
<dbReference type="eggNOG" id="arCOG01983">
    <property type="taxonomic scope" value="Archaea"/>
</dbReference>
<dbReference type="HOGENOM" id="CLU_076364_2_1_2"/>
<dbReference type="OrthoDB" id="27513at2157"/>
<dbReference type="PhylomeDB" id="Q9V1G7"/>
<dbReference type="UniPathway" id="UPA00035">
    <property type="reaction ID" value="UER00042"/>
</dbReference>
<dbReference type="Proteomes" id="UP000000810">
    <property type="component" value="Chromosome"/>
</dbReference>
<dbReference type="Proteomes" id="UP000009139">
    <property type="component" value="Chromosome"/>
</dbReference>
<dbReference type="GO" id="GO:0004640">
    <property type="term" value="F:phosphoribosylanthranilate isomerase activity"/>
    <property type="evidence" value="ECO:0007669"/>
    <property type="project" value="UniProtKB-UniRule"/>
</dbReference>
<dbReference type="GO" id="GO:0000162">
    <property type="term" value="P:L-tryptophan biosynthetic process"/>
    <property type="evidence" value="ECO:0007669"/>
    <property type="project" value="UniProtKB-UniRule"/>
</dbReference>
<dbReference type="CDD" id="cd00405">
    <property type="entry name" value="PRAI"/>
    <property type="match status" value="1"/>
</dbReference>
<dbReference type="Gene3D" id="3.20.20.70">
    <property type="entry name" value="Aldolase class I"/>
    <property type="match status" value="1"/>
</dbReference>
<dbReference type="HAMAP" id="MF_00135">
    <property type="entry name" value="PRAI"/>
    <property type="match status" value="1"/>
</dbReference>
<dbReference type="InterPro" id="IPR013785">
    <property type="entry name" value="Aldolase_TIM"/>
</dbReference>
<dbReference type="InterPro" id="IPR001240">
    <property type="entry name" value="PRAI_dom"/>
</dbReference>
<dbReference type="InterPro" id="IPR011060">
    <property type="entry name" value="RibuloseP-bd_barrel"/>
</dbReference>
<dbReference type="InterPro" id="IPR044643">
    <property type="entry name" value="TrpF_fam"/>
</dbReference>
<dbReference type="NCBIfam" id="NF002304">
    <property type="entry name" value="PRK01222.2-4"/>
    <property type="match status" value="1"/>
</dbReference>
<dbReference type="PANTHER" id="PTHR42894">
    <property type="entry name" value="N-(5'-PHOSPHORIBOSYL)ANTHRANILATE ISOMERASE"/>
    <property type="match status" value="1"/>
</dbReference>
<dbReference type="PANTHER" id="PTHR42894:SF1">
    <property type="entry name" value="N-(5'-PHOSPHORIBOSYL)ANTHRANILATE ISOMERASE"/>
    <property type="match status" value="1"/>
</dbReference>
<dbReference type="Pfam" id="PF00697">
    <property type="entry name" value="PRAI"/>
    <property type="match status" value="1"/>
</dbReference>
<dbReference type="SUPFAM" id="SSF51366">
    <property type="entry name" value="Ribulose-phoshate binding barrel"/>
    <property type="match status" value="1"/>
</dbReference>
<protein>
    <recommendedName>
        <fullName>N-(5'-phosphoribosyl)anthranilate isomerase</fullName>
        <shortName>PRAI</shortName>
        <ecNumber>5.3.1.24</ecNumber>
    </recommendedName>
</protein>
<evidence type="ECO:0000305" key="1"/>
<proteinExistence type="inferred from homology"/>
<organism>
    <name type="scientific">Pyrococcus abyssi (strain GE5 / Orsay)</name>
    <dbReference type="NCBI Taxonomy" id="272844"/>
    <lineage>
        <taxon>Archaea</taxon>
        <taxon>Methanobacteriati</taxon>
        <taxon>Methanobacteriota</taxon>
        <taxon>Thermococci</taxon>
        <taxon>Thermococcales</taxon>
        <taxon>Thermococcaceae</taxon>
        <taxon>Pyrococcus</taxon>
    </lineage>
</organism>
<feature type="chain" id="PRO_0000154410" description="N-(5'-phosphoribosyl)anthranilate isomerase">
    <location>
        <begin position="1"/>
        <end position="208"/>
    </location>
</feature>
<reference key="1">
    <citation type="journal article" date="2003" name="Mol. Microbiol.">
        <title>An integrated analysis of the genome of the hyperthermophilic archaeon Pyrococcus abyssi.</title>
        <authorList>
            <person name="Cohen G.N."/>
            <person name="Barbe V."/>
            <person name="Flament D."/>
            <person name="Galperin M."/>
            <person name="Heilig R."/>
            <person name="Lecompte O."/>
            <person name="Poch O."/>
            <person name="Prieur D."/>
            <person name="Querellou J."/>
            <person name="Ripp R."/>
            <person name="Thierry J.-C."/>
            <person name="Van der Oost J."/>
            <person name="Weissenbach J."/>
            <person name="Zivanovic Y."/>
            <person name="Forterre P."/>
        </authorList>
    </citation>
    <scope>NUCLEOTIDE SEQUENCE [LARGE SCALE GENOMIC DNA]</scope>
    <source>
        <strain>GE5 / Orsay</strain>
    </source>
</reference>
<reference key="2">
    <citation type="journal article" date="2012" name="Curr. Microbiol.">
        <title>Re-annotation of two hyperthermophilic archaea Pyrococcus abyssi GE5 and Pyrococcus furiosus DSM 3638.</title>
        <authorList>
            <person name="Gao J."/>
            <person name="Wang J."/>
        </authorList>
    </citation>
    <scope>GENOME REANNOTATION</scope>
    <source>
        <strain>GE5 / Orsay</strain>
    </source>
</reference>
<keyword id="KW-0028">Amino-acid biosynthesis</keyword>
<keyword id="KW-0057">Aromatic amino acid biosynthesis</keyword>
<keyword id="KW-0413">Isomerase</keyword>
<keyword id="KW-0822">Tryptophan biosynthesis</keyword>